<sequence>MTLLAVNGGSPIRSQQWPLWPAPAPGALDALNEVLHSGRWAISGPYQGKQSFERRFAAAFAEFHEIGHCVPTSSGTASLMVALEACGVGAGDEVIIPGLTWVANASTVAGVNAVPVPVDVDPQTLCLDPAAVERAITPRTAAIVVVHLYSAVADLDALTAIAERHEIPLIEDCAQAHGARYRDRRVGTFGAFGTFSMQHSKVLTSGEGGAVITGDAALSRRAEHLRADGRTYTPDEPAVGEMELAQTAELMGSNRCLSEFQAALLLGQLELLDEQNERRRANAALLDEGLGALGIQPQVSSPGTTERTYYEWAGRIEDDGIGQIGVERIAPAVAAELSGAAIYASYPPMNHNRLYQPATRARFKGIAGLDLTGYSLPVAEDAGQRVVTIHHSALLGDESDMKDIVRAFEKVFANHRELRG</sequence>
<gene>
    <name type="primary">gntA</name>
    <name type="synonym">genS1</name>
    <name type="synonym">gtmB</name>
</gene>
<name>GLDSA_MICEC</name>
<feature type="chain" id="PRO_0000233017" description="L-glutamine:2-deoxy-scyllo-inosose aminotransferase">
    <location>
        <begin position="1"/>
        <end position="420"/>
    </location>
</feature>
<feature type="modified residue" description="N6-(pyridoxal phosphate)lysine" evidence="1">
    <location>
        <position position="201"/>
    </location>
</feature>
<reference key="1">
    <citation type="journal article" date="2004" name="J. Antibiot.">
        <title>Gene cluster in Micromonospora echinospora ATCC15835 for the biosynthesis of the gentamicin C complex.</title>
        <authorList>
            <person name="Unwin J."/>
            <person name="Standage S."/>
            <person name="Alexander D."/>
            <person name="Hosted T. Jr."/>
            <person name="Horan A.C."/>
            <person name="Wellington E.M."/>
        </authorList>
    </citation>
    <scope>NUCLEOTIDE SEQUENCE [GENOMIC DNA]</scope>
    <source>
        <strain>ATCC 15835 / DSM 43036 / BCRC 11561 / JCM 3074 / NBRC 12575 / NCIMB 12882 / NRRL 2953</strain>
    </source>
</reference>
<reference key="2">
    <citation type="journal article" date="2004" name="Mol. Cells">
        <title>Molecular cloning and characterization of a 2-deoxystreptamine biosynthetic gene cluster in gentamicin-producing Micromonospora echinospora ATCC15835.</title>
        <authorList>
            <person name="Kharel M.K."/>
            <person name="Basnet D.B."/>
            <person name="Lee H.C."/>
            <person name="Liou K."/>
            <person name="Moon Y.H."/>
            <person name="Kim J.-J."/>
            <person name="Woo J.S."/>
            <person name="Sohng J.K."/>
        </authorList>
    </citation>
    <scope>NUCLEOTIDE SEQUENCE [GENOMIC DNA]</scope>
    <source>
        <strain>ATCC 15835 / DSM 43036 / BCRC 11561 / JCM 3074 / NBRC 12575 / NCIMB 12882 / NRRL 2953</strain>
    </source>
</reference>
<reference key="3">
    <citation type="submission" date="2004-02" db="EMBL/GenBank/DDBJ databases">
        <title>Cloning and sequencing of the gentamicin biosynthetic gene cluster from Micromonospora echinospora DSM 43036.</title>
        <authorList>
            <person name="Aboshanab K.M.A."/>
            <person name="Schmidt-Beissner H."/>
            <person name="Wehmeier U.F."/>
            <person name="Welzel K."/>
            <person name="Vente A."/>
            <person name="Piepersberg W."/>
        </authorList>
    </citation>
    <scope>NUCLEOTIDE SEQUENCE [GENOMIC DNA]</scope>
    <source>
        <strain>ATCC 15835 / DSM 43036 / BCRC 11561 / JCM 3074 / NBRC 12575 / NCIMB 12882 / NRRL 2953</strain>
    </source>
</reference>
<evidence type="ECO:0000250" key="1"/>
<evidence type="ECO:0000250" key="2">
    <source>
        <dbReference type="UniProtKB" id="Q6L739"/>
    </source>
</evidence>
<evidence type="ECO:0000305" key="3"/>
<accession>Q6QVU4</accession>
<accession>Q70KC9</accession>
<proteinExistence type="inferred from homology"/>
<organism>
    <name type="scientific">Micromonospora echinospora</name>
    <name type="common">Micromonospora purpurea</name>
    <dbReference type="NCBI Taxonomy" id="1877"/>
    <lineage>
        <taxon>Bacteria</taxon>
        <taxon>Bacillati</taxon>
        <taxon>Actinomycetota</taxon>
        <taxon>Actinomycetes</taxon>
        <taxon>Micromonosporales</taxon>
        <taxon>Micromonosporaceae</taxon>
        <taxon>Micromonospora</taxon>
    </lineage>
</organism>
<protein>
    <recommendedName>
        <fullName>L-glutamine:2-deoxy-scyllo-inosose aminotransferase</fullName>
        <shortName>L-glutamine:DOI aminotransferase</shortName>
        <ecNumber evidence="2">2.6.1.100</ecNumber>
    </recommendedName>
    <alternativeName>
        <fullName>L-glutamine:3-amino-2,3-dideoxy-scyllo-inosose aminotransferase</fullName>
        <shortName>L-glutamine:amino-DOI aminotransferase</shortName>
        <ecNumber evidence="2">2.6.1.101</ecNumber>
    </alternativeName>
</protein>
<keyword id="KW-0032">Aminotransferase</keyword>
<keyword id="KW-0045">Antibiotic biosynthesis</keyword>
<keyword id="KW-0663">Pyridoxal phosphate</keyword>
<keyword id="KW-0808">Transferase</keyword>
<dbReference type="EC" id="2.6.1.100" evidence="2"/>
<dbReference type="EC" id="2.6.1.101" evidence="2"/>
<dbReference type="EMBL" id="AY524043">
    <property type="protein sequence ID" value="AAR98547.1"/>
    <property type="molecule type" value="Genomic_DNA"/>
</dbReference>
<dbReference type="EMBL" id="AJ575934">
    <property type="protein sequence ID" value="CAE06512.2"/>
    <property type="molecule type" value="Genomic_DNA"/>
</dbReference>
<dbReference type="EMBL" id="AJ628149">
    <property type="protein sequence ID" value="CAF31430.1"/>
    <property type="molecule type" value="Genomic_DNA"/>
</dbReference>
<dbReference type="SMR" id="Q6QVU4"/>
<dbReference type="UniPathway" id="UPA00907">
    <property type="reaction ID" value="UER00922"/>
</dbReference>
<dbReference type="UniPathway" id="UPA00967"/>
<dbReference type="GO" id="GO:0030170">
    <property type="term" value="F:pyridoxal phosphate binding"/>
    <property type="evidence" value="ECO:0007669"/>
    <property type="project" value="TreeGrafter"/>
</dbReference>
<dbReference type="GO" id="GO:0008483">
    <property type="term" value="F:transaminase activity"/>
    <property type="evidence" value="ECO:0007669"/>
    <property type="project" value="UniProtKB-KW"/>
</dbReference>
<dbReference type="GO" id="GO:0017000">
    <property type="term" value="P:antibiotic biosynthetic process"/>
    <property type="evidence" value="ECO:0007669"/>
    <property type="project" value="UniProtKB-KW"/>
</dbReference>
<dbReference type="GO" id="GO:0000271">
    <property type="term" value="P:polysaccharide biosynthetic process"/>
    <property type="evidence" value="ECO:0007669"/>
    <property type="project" value="TreeGrafter"/>
</dbReference>
<dbReference type="CDD" id="cd00616">
    <property type="entry name" value="AHBA_syn"/>
    <property type="match status" value="1"/>
</dbReference>
<dbReference type="Gene3D" id="3.90.1150.10">
    <property type="entry name" value="Aspartate Aminotransferase, domain 1"/>
    <property type="match status" value="1"/>
</dbReference>
<dbReference type="Gene3D" id="3.40.640.10">
    <property type="entry name" value="Type I PLP-dependent aspartate aminotransferase-like (Major domain)"/>
    <property type="match status" value="1"/>
</dbReference>
<dbReference type="InterPro" id="IPR000653">
    <property type="entry name" value="DegT/StrS_aminotransferase"/>
</dbReference>
<dbReference type="InterPro" id="IPR015424">
    <property type="entry name" value="PyrdxlP-dep_Trfase"/>
</dbReference>
<dbReference type="InterPro" id="IPR015421">
    <property type="entry name" value="PyrdxlP-dep_Trfase_major"/>
</dbReference>
<dbReference type="InterPro" id="IPR015422">
    <property type="entry name" value="PyrdxlP-dep_Trfase_small"/>
</dbReference>
<dbReference type="PANTHER" id="PTHR30244:SF34">
    <property type="entry name" value="DTDP-4-AMINO-4,6-DIDEOXYGALACTOSE TRANSAMINASE"/>
    <property type="match status" value="1"/>
</dbReference>
<dbReference type="PANTHER" id="PTHR30244">
    <property type="entry name" value="TRANSAMINASE"/>
    <property type="match status" value="1"/>
</dbReference>
<dbReference type="Pfam" id="PF01041">
    <property type="entry name" value="DegT_DnrJ_EryC1"/>
    <property type="match status" value="1"/>
</dbReference>
<dbReference type="PIRSF" id="PIRSF000390">
    <property type="entry name" value="PLP_StrS"/>
    <property type="match status" value="1"/>
</dbReference>
<dbReference type="SUPFAM" id="SSF53383">
    <property type="entry name" value="PLP-dependent transferases"/>
    <property type="match status" value="1"/>
</dbReference>
<comment type="function">
    <text evidence="2">Catalyzes the PLP-dependent transamination of 2-deoxy-scyllo-inosose (2-DOI) to form 2-deoxy-scyllo-inosamine (2-DOIA) using L-glutamine as the amino donor. Also catalyzes the transamination of 3-amino-2,3-dideoxy-scyllo-inosose (keto-2-DOIA) into 2-deoxystreptamine (2-DOS).</text>
</comment>
<comment type="catalytic activity">
    <reaction evidence="2">
        <text>2-deoxy-L-scyllo-inosose + L-glutamine = 2-deoxy-scyllo-inosamine + 2-oxoglutaramate</text>
        <dbReference type="Rhea" id="RHEA:34147"/>
        <dbReference type="ChEBI" id="CHEBI:16769"/>
        <dbReference type="ChEBI" id="CHEBI:58359"/>
        <dbReference type="ChEBI" id="CHEBI:64796"/>
        <dbReference type="ChEBI" id="CHEBI:65003"/>
        <dbReference type="EC" id="2.6.1.100"/>
    </reaction>
</comment>
<comment type="catalytic activity">
    <reaction evidence="2">
        <text>3-amino-2,3-dideoxy-scyllo-inosose + L-glutamine = 2-deoxystreptamine + 2-oxoglutaramate</text>
        <dbReference type="Rhea" id="RHEA:34151"/>
        <dbReference type="ChEBI" id="CHEBI:16769"/>
        <dbReference type="ChEBI" id="CHEBI:58359"/>
        <dbReference type="ChEBI" id="CHEBI:65002"/>
        <dbReference type="ChEBI" id="CHEBI:65069"/>
        <dbReference type="EC" id="2.6.1.101"/>
    </reaction>
</comment>
<comment type="cofactor">
    <cofactor evidence="1">
        <name>pyridoxal 5'-phosphate</name>
        <dbReference type="ChEBI" id="CHEBI:597326"/>
    </cofactor>
</comment>
<comment type="pathway">
    <text>Metabolic intermediate biosynthesis; 2-deoxystreptamine biosynthesis; 2-deoxystreptamine from D-glucose 6-phosphate: step 2/4.</text>
</comment>
<comment type="pathway">
    <text>Antibiotic biosynthesis; gentamicin biosynthesis.</text>
</comment>
<comment type="similarity">
    <text evidence="3">Belongs to the DegT/DnrJ/EryC1 family. L-glutamine:2-deoxy-scyllo-inosose/scyllo-inosose aminotransferase subfamily.</text>
</comment>